<name>AMY_CLOAB</name>
<proteinExistence type="inferred from homology"/>
<reference key="1">
    <citation type="submission" date="1999-03" db="EMBL/GenBank/DDBJ databases">
        <title>Nucleotide sequence analysis and ECF sigma factor-dependent expression of an alpha-amylase gene from Clostridium acetobutylicum DSM 792.</title>
        <authorList>
            <person name="Schaffer S."/>
            <person name="Duerre P."/>
        </authorList>
    </citation>
    <scope>NUCLEOTIDE SEQUENCE [GENOMIC DNA]</scope>
    <source>
        <strain>ATCC 824 / DSM 792 / JCM 1419 / IAM 19013 / LMG 5710 / NBRC 13948 / NRRL B-527 / VKM B-1787 / 2291 / W</strain>
    </source>
</reference>
<reference key="2">
    <citation type="submission" date="1999-06" db="EMBL/GenBank/DDBJ databases">
        <title>Molecular characterization of amyP, a pSOL1 located gene coding the major alpha-amylase of Clostridium acetobutylicum ATCC824, and its use as a reporter system for strain degeneration.</title>
        <authorList>
            <person name="Sabathe F."/>
            <person name="Cornillot E."/>
            <person name="Croux C."/>
            <person name="Soucaille P."/>
        </authorList>
    </citation>
    <scope>NUCLEOTIDE SEQUENCE [GENOMIC DNA]</scope>
    <source>
        <strain>ATCC 824 / DSM 792 / JCM 1419 / IAM 19013 / LMG 5710 / NBRC 13948 / NRRL B-527 / VKM B-1787 / 2291 / W</strain>
    </source>
</reference>
<reference key="3">
    <citation type="journal article" date="2001" name="J. Bacteriol.">
        <title>Genome sequence and comparative analysis of the solvent-producing bacterium Clostridium acetobutylicum.</title>
        <authorList>
            <person name="Noelling J."/>
            <person name="Breton G."/>
            <person name="Omelchenko M.V."/>
            <person name="Makarova K.S."/>
            <person name="Zeng Q."/>
            <person name="Gibson R."/>
            <person name="Lee H.M."/>
            <person name="Dubois J."/>
            <person name="Qiu D."/>
            <person name="Hitti J."/>
            <person name="Wolf Y.I."/>
            <person name="Tatusov R.L."/>
            <person name="Sabathe F."/>
            <person name="Doucette-Stamm L.A."/>
            <person name="Soucaille P."/>
            <person name="Daly M.J."/>
            <person name="Bennett G.N."/>
            <person name="Koonin E.V."/>
            <person name="Smith D.R."/>
        </authorList>
    </citation>
    <scope>NUCLEOTIDE SEQUENCE [LARGE SCALE GENOMIC DNA]</scope>
    <source>
        <strain>ATCC 824 / DSM 792 / JCM 1419 / IAM 19013 / LMG 5710 / NBRC 13948 / NRRL B-527 / VKM B-1787 / 2291 / W</strain>
    </source>
</reference>
<reference key="4">
    <citation type="journal article" date="1990" name="J. Bacteriol.">
        <title>Cloning, sequencing, and molecular analysis of the acetoacetate decarboxylase gene region from Clostridium acetobutylicum.</title>
        <authorList>
            <person name="Gerischer U."/>
            <person name="Duerre P."/>
        </authorList>
    </citation>
    <scope>NUCLEOTIDE SEQUENCE [GENOMIC DNA] OF 292-760</scope>
    <source>
        <strain>ATCC 824 / DSM 792 / JCM 1419 / IAM 19013 / LMG 5710 / NBRC 13948 / NRRL B-527 / VKM B-1787 / 2291 / W</strain>
    </source>
</reference>
<protein>
    <recommendedName>
        <fullName>Alpha-amylase</fullName>
        <ecNumber>3.2.1.1</ecNumber>
    </recommendedName>
    <alternativeName>
        <fullName>1,4-alpha-D-glucan glucanohydrolase</fullName>
    </alternativeName>
</protein>
<evidence type="ECO:0000250" key="1"/>
<evidence type="ECO:0000255" key="2"/>
<evidence type="ECO:0000305" key="3"/>
<feature type="signal peptide" evidence="2">
    <location>
        <begin position="1"/>
        <end position="34"/>
    </location>
</feature>
<feature type="chain" id="PRO_0000001338" description="Alpha-amylase">
    <location>
        <begin position="35"/>
        <end position="760"/>
    </location>
</feature>
<feature type="active site" description="Nucleophile" evidence="1">
    <location>
        <position position="222"/>
    </location>
</feature>
<feature type="active site" description="Proton donor" evidence="1">
    <location>
        <position position="262"/>
    </location>
</feature>
<feature type="binding site" evidence="1">
    <location>
        <position position="143"/>
    </location>
    <ligand>
        <name>Ca(2+)</name>
        <dbReference type="ChEBI" id="CHEBI:29108"/>
    </ligand>
</feature>
<feature type="binding site" evidence="1">
    <location>
        <position position="184"/>
    </location>
    <ligand>
        <name>Ca(2+)</name>
        <dbReference type="ChEBI" id="CHEBI:29108"/>
    </ligand>
</feature>
<feature type="binding site" evidence="1">
    <location>
        <position position="192"/>
    </location>
    <ligand>
        <name>Ca(2+)</name>
        <dbReference type="ChEBI" id="CHEBI:29108"/>
    </ligand>
</feature>
<feature type="binding site" evidence="1">
    <location>
        <position position="226"/>
    </location>
    <ligand>
        <name>Ca(2+)</name>
        <dbReference type="ChEBI" id="CHEBI:29108"/>
    </ligand>
</feature>
<feature type="site" description="Transition state stabilizer" evidence="1">
    <location>
        <position position="321"/>
    </location>
</feature>
<feature type="sequence conflict" description="In Ref. 1; AAA63759." evidence="3" ref="1">
    <original>D</original>
    <variation>H</variation>
    <location>
        <position position="213"/>
    </location>
</feature>
<feature type="sequence conflict" description="In Ref. 1; AAA63759." evidence="3" ref="1">
    <original>D</original>
    <variation>H</variation>
    <location>
        <position position="222"/>
    </location>
</feature>
<feature type="sequence conflict" description="In Ref. 1; AAA63759." evidence="3" ref="1">
    <original>A</original>
    <variation>G</variation>
    <location>
        <position position="571"/>
    </location>
</feature>
<keyword id="KW-0106">Calcium</keyword>
<keyword id="KW-0119">Carbohydrate metabolism</keyword>
<keyword id="KW-0326">Glycosidase</keyword>
<keyword id="KW-0378">Hydrolase</keyword>
<keyword id="KW-0479">Metal-binding</keyword>
<keyword id="KW-0614">Plasmid</keyword>
<keyword id="KW-1185">Reference proteome</keyword>
<keyword id="KW-0732">Signal</keyword>
<organism>
    <name type="scientific">Clostridium acetobutylicum (strain ATCC 824 / DSM 792 / JCM 1419 / IAM 19013 / LMG 5710 / NBRC 13948 / NRRL B-527 / VKM B-1787 / 2291 / W)</name>
    <dbReference type="NCBI Taxonomy" id="272562"/>
    <lineage>
        <taxon>Bacteria</taxon>
        <taxon>Bacillati</taxon>
        <taxon>Bacillota</taxon>
        <taxon>Clostridia</taxon>
        <taxon>Eubacteriales</taxon>
        <taxon>Clostridiaceae</taxon>
        <taxon>Clostridium</taxon>
    </lineage>
</organism>
<geneLocation type="plasmid">
    <name>pSOL1</name>
</geneLocation>
<dbReference type="EC" id="3.2.1.1"/>
<dbReference type="EMBL" id="M55392">
    <property type="protein sequence ID" value="AAA63759.2"/>
    <property type="molecule type" value="Genomic_DNA"/>
</dbReference>
<dbReference type="EMBL" id="AF164199">
    <property type="protein sequence ID" value="AAD47072.1"/>
    <property type="molecule type" value="Genomic_DNA"/>
</dbReference>
<dbReference type="EMBL" id="AE001438">
    <property type="protein sequence ID" value="AAK76913.1"/>
    <property type="molecule type" value="Genomic_DNA"/>
</dbReference>
<dbReference type="PIR" id="B37837">
    <property type="entry name" value="B37837"/>
</dbReference>
<dbReference type="RefSeq" id="NP_149331.1">
    <property type="nucleotide sequence ID" value="NC_001988.2"/>
</dbReference>
<dbReference type="RefSeq" id="WP_010890852.1">
    <property type="nucleotide sequence ID" value="NC_001988.2"/>
</dbReference>
<dbReference type="SMR" id="P23671"/>
<dbReference type="CAZy" id="CBM25">
    <property type="family name" value="Carbohydrate-Binding Module Family 25"/>
</dbReference>
<dbReference type="CAZy" id="GH13">
    <property type="family name" value="Glycoside Hydrolase Family 13"/>
</dbReference>
<dbReference type="KEGG" id="cac:CA_P0168"/>
<dbReference type="PATRIC" id="fig|272562.8.peg.169"/>
<dbReference type="HOGENOM" id="CLU_013336_4_1_9"/>
<dbReference type="OrthoDB" id="9761789at2"/>
<dbReference type="Proteomes" id="UP000000814">
    <property type="component" value="Plasmid pSOL1"/>
</dbReference>
<dbReference type="GO" id="GO:0004556">
    <property type="term" value="F:alpha-amylase activity"/>
    <property type="evidence" value="ECO:0007669"/>
    <property type="project" value="UniProtKB-EC"/>
</dbReference>
<dbReference type="GO" id="GO:0046872">
    <property type="term" value="F:metal ion binding"/>
    <property type="evidence" value="ECO:0007669"/>
    <property type="project" value="UniProtKB-KW"/>
</dbReference>
<dbReference type="GO" id="GO:2001070">
    <property type="term" value="F:starch binding"/>
    <property type="evidence" value="ECO:0007669"/>
    <property type="project" value="InterPro"/>
</dbReference>
<dbReference type="GO" id="GO:0005975">
    <property type="term" value="P:carbohydrate metabolic process"/>
    <property type="evidence" value="ECO:0007669"/>
    <property type="project" value="InterPro"/>
</dbReference>
<dbReference type="CDD" id="cd11315">
    <property type="entry name" value="AmyAc_bac1_AmyA"/>
    <property type="match status" value="1"/>
</dbReference>
<dbReference type="CDD" id="cd02688">
    <property type="entry name" value="E_set"/>
    <property type="match status" value="1"/>
</dbReference>
<dbReference type="Gene3D" id="3.20.20.80">
    <property type="entry name" value="Glycosidases"/>
    <property type="match status" value="1"/>
</dbReference>
<dbReference type="Gene3D" id="2.60.40.1180">
    <property type="entry name" value="Golgi alpha-mannosidase II"/>
    <property type="match status" value="1"/>
</dbReference>
<dbReference type="Gene3D" id="2.60.40.10">
    <property type="entry name" value="Immunoglobulins"/>
    <property type="match status" value="3"/>
</dbReference>
<dbReference type="InterPro" id="IPR031319">
    <property type="entry name" value="A-amylase_C"/>
</dbReference>
<dbReference type="InterPro" id="IPR006046">
    <property type="entry name" value="Alpha_amylase"/>
</dbReference>
<dbReference type="InterPro" id="IPR005085">
    <property type="entry name" value="CBM25"/>
</dbReference>
<dbReference type="InterPro" id="IPR006047">
    <property type="entry name" value="Glyco_hydro_13_cat_dom"/>
</dbReference>
<dbReference type="InterPro" id="IPR013780">
    <property type="entry name" value="Glyco_hydro_b"/>
</dbReference>
<dbReference type="InterPro" id="IPR017853">
    <property type="entry name" value="Glycoside_hydrolase_SF"/>
</dbReference>
<dbReference type="InterPro" id="IPR013783">
    <property type="entry name" value="Ig-like_fold"/>
</dbReference>
<dbReference type="PANTHER" id="PTHR43447">
    <property type="entry name" value="ALPHA-AMYLASE"/>
    <property type="match status" value="1"/>
</dbReference>
<dbReference type="Pfam" id="PF00128">
    <property type="entry name" value="Alpha-amylase"/>
    <property type="match status" value="1"/>
</dbReference>
<dbReference type="Pfam" id="PF16760">
    <property type="entry name" value="CBM53"/>
    <property type="match status" value="3"/>
</dbReference>
<dbReference type="PRINTS" id="PR00110">
    <property type="entry name" value="ALPHAAMYLASE"/>
</dbReference>
<dbReference type="SMART" id="SM00642">
    <property type="entry name" value="Aamy"/>
    <property type="match status" value="1"/>
</dbReference>
<dbReference type="SMART" id="SM00632">
    <property type="entry name" value="Aamy_C"/>
    <property type="match status" value="1"/>
</dbReference>
<dbReference type="SMART" id="SM01066">
    <property type="entry name" value="CBM_25"/>
    <property type="match status" value="3"/>
</dbReference>
<dbReference type="SUPFAM" id="SSF51445">
    <property type="entry name" value="(Trans)glycosidases"/>
    <property type="match status" value="1"/>
</dbReference>
<dbReference type="SUPFAM" id="SSF51011">
    <property type="entry name" value="Glycosyl hydrolase domain"/>
    <property type="match status" value="1"/>
</dbReference>
<comment type="catalytic activity">
    <reaction>
        <text>Endohydrolysis of (1-&gt;4)-alpha-D-glucosidic linkages in polysaccharides containing three or more (1-&gt;4)-alpha-linked D-glucose units.</text>
        <dbReference type="EC" id="3.2.1.1"/>
    </reaction>
</comment>
<comment type="cofactor">
    <cofactor evidence="1">
        <name>Ca(2+)</name>
        <dbReference type="ChEBI" id="CHEBI:29108"/>
    </cofactor>
    <text evidence="1">Binds 1 Ca(2+) ion per subunit.</text>
</comment>
<comment type="subunit">
    <text evidence="1">Monomer.</text>
</comment>
<comment type="similarity">
    <text evidence="3">Belongs to the glycosyl hydrolase 13 family.</text>
</comment>
<gene>
    <name type="primary">amyA</name>
    <name type="synonym">amyP</name>
    <name type="ordered locus">CA_P0168</name>
</gene>
<accession>P23671</accession>
<accession>Q9S429</accession>
<sequence>MSKRSKLLKRRMLSLSVICVLIGYGPVFNPVRSQAKVMTYSSENRELPENTKDGVMLHAFDWSFNNIKKELPSIAAAGYKAVQVSPVQGTKSNSTNSSDWWLLYQPTNQAIGNAQLGSYDDFKSLCSEAKNYGISIVVDVVMNHMANNGNDDEVASEVDPSFKDPSLYHHNGQCTDWNNRQDVTQEGIGMPDLNTQSSAVQSKAITFLNQCVDAGATGFRFDAAKHIETDLGLDANKSWSGNYWENVLGSLHNKSNLYIYGEVLQDGKVDNISAYESFMNVEASAYDGSLRGAIKSGDLTNAQGMGGLDSNKCVDMLETHDEYEHNESKDLTDWQRKAGWAIAASRAGSVPLFFDRPTGNIGSEGDALWKDSDVVAVNEFHNAMAGQNEYLRLQNNNKAMIIERGSKGAVIVNEGDSFNLNTPTNLEDGNYDNHGSATDSLTVSQGRMTGTVPANSIIVIYNKNSNPGSDRVTLSEQAAKAGDSVTITYDAGTTALKDASNVNLYWGYDGFSAATSKAMTSLGDNKWQTTITVPKEVTKNVNFSFTDGTSWDNNNGANWNIPLASNYLPHAGYKVDYDSSNLVSGNNFTIYYNGNLANSSNVSLHWGVNGWSNMQNLAMVKDSNGFWEATIAIPASSNTLNFCFTNGSSWDNNNNNNWTLNTWSSVPKVQVTPAPEACKQISVYYNGSLASSASNITLHWGCNGFTSPQDINMVKQADGRWLANITLPSGCYNVNMAFKDQSGTWDNNNSNNYNFSSTNN</sequence>